<sequence length="414" mass="47116">MKNNILEELKWRGLIKQVTNEQKILDAQNSNDAVYCGFDPTADSLHVGHLMMIITLKRFALQGFKPIALIGGATGMIGDPSFKASERVLQTKQQVDHNINKISTQLKEIIPTVSFVNNRDWLEDISLIDFLRDIGKHFNLSYLLAKESIATRIQTGLSVTEFCYTMLQAFDFYYLYKNNDCSVQIGGSDQWGNITSGIDFISDTINKNNKASGVTINLLTKSDGQKFGKTESGAVWLDKTKTSEYEFYQFWFNQTDEDSINLLKCLTFLTKDQIEQLIKQHNQQPAKHFLQKALASEMTKFVHQQQGLDKALKLTEAFFSGDLFSLTDDLFKMALNSLPNTQINKDTKVIDALVELKVASSKREAREFLKNKAILINNQVIEDENLVISSFDLIQNKYLLVKKGKKKYFVILVK</sequence>
<reference key="1">
    <citation type="submission" date="2005-09" db="EMBL/GenBank/DDBJ databases">
        <authorList>
            <person name="Glass J.I."/>
            <person name="Lartigue C."/>
            <person name="Pfannkoch C."/>
            <person name="Baden-Tillson H."/>
            <person name="Smith H.O."/>
            <person name="Venter J.C."/>
            <person name="Roske K."/>
            <person name="Wise K.S."/>
            <person name="Calcutt M.J."/>
            <person name="Nelson W.C."/>
            <person name="Nierman W.C."/>
        </authorList>
    </citation>
    <scope>NUCLEOTIDE SEQUENCE [LARGE SCALE GENOMIC DNA]</scope>
    <source>
        <strain>California kid / ATCC 27343 / NCTC 10154</strain>
    </source>
</reference>
<dbReference type="EC" id="6.1.1.1" evidence="1"/>
<dbReference type="EMBL" id="CP000123">
    <property type="protein sequence ID" value="ABC01092.1"/>
    <property type="molecule type" value="Genomic_DNA"/>
</dbReference>
<dbReference type="RefSeq" id="WP_011387503.1">
    <property type="nucleotide sequence ID" value="NC_007633.1"/>
</dbReference>
<dbReference type="SMR" id="Q2SRK6"/>
<dbReference type="GeneID" id="23778406"/>
<dbReference type="KEGG" id="mcp:MCAP_0639"/>
<dbReference type="HOGENOM" id="CLU_024003_0_3_14"/>
<dbReference type="PhylomeDB" id="Q2SRK6"/>
<dbReference type="Proteomes" id="UP000001928">
    <property type="component" value="Chromosome"/>
</dbReference>
<dbReference type="GO" id="GO:0005829">
    <property type="term" value="C:cytosol"/>
    <property type="evidence" value="ECO:0007669"/>
    <property type="project" value="TreeGrafter"/>
</dbReference>
<dbReference type="GO" id="GO:0005524">
    <property type="term" value="F:ATP binding"/>
    <property type="evidence" value="ECO:0007669"/>
    <property type="project" value="UniProtKB-UniRule"/>
</dbReference>
<dbReference type="GO" id="GO:0003723">
    <property type="term" value="F:RNA binding"/>
    <property type="evidence" value="ECO:0007669"/>
    <property type="project" value="UniProtKB-KW"/>
</dbReference>
<dbReference type="GO" id="GO:0004831">
    <property type="term" value="F:tyrosine-tRNA ligase activity"/>
    <property type="evidence" value="ECO:0007669"/>
    <property type="project" value="UniProtKB-UniRule"/>
</dbReference>
<dbReference type="GO" id="GO:0006437">
    <property type="term" value="P:tyrosyl-tRNA aminoacylation"/>
    <property type="evidence" value="ECO:0007669"/>
    <property type="project" value="UniProtKB-UniRule"/>
</dbReference>
<dbReference type="CDD" id="cd00165">
    <property type="entry name" value="S4"/>
    <property type="match status" value="1"/>
</dbReference>
<dbReference type="CDD" id="cd00805">
    <property type="entry name" value="TyrRS_core"/>
    <property type="match status" value="1"/>
</dbReference>
<dbReference type="FunFam" id="1.10.240.10:FF:000001">
    <property type="entry name" value="Tyrosine--tRNA ligase"/>
    <property type="match status" value="1"/>
</dbReference>
<dbReference type="Gene3D" id="3.40.50.620">
    <property type="entry name" value="HUPs"/>
    <property type="match status" value="1"/>
</dbReference>
<dbReference type="Gene3D" id="3.10.290.10">
    <property type="entry name" value="RNA-binding S4 domain"/>
    <property type="match status" value="1"/>
</dbReference>
<dbReference type="Gene3D" id="1.10.240.10">
    <property type="entry name" value="Tyrosyl-Transfer RNA Synthetase"/>
    <property type="match status" value="1"/>
</dbReference>
<dbReference type="HAMAP" id="MF_02006">
    <property type="entry name" value="Tyr_tRNA_synth_type1"/>
    <property type="match status" value="1"/>
</dbReference>
<dbReference type="InterPro" id="IPR001412">
    <property type="entry name" value="aa-tRNA-synth_I_CS"/>
</dbReference>
<dbReference type="InterPro" id="IPR002305">
    <property type="entry name" value="aa-tRNA-synth_Ic"/>
</dbReference>
<dbReference type="InterPro" id="IPR014729">
    <property type="entry name" value="Rossmann-like_a/b/a_fold"/>
</dbReference>
<dbReference type="InterPro" id="IPR036986">
    <property type="entry name" value="S4_RNA-bd_sf"/>
</dbReference>
<dbReference type="InterPro" id="IPR054608">
    <property type="entry name" value="SYY-like_C"/>
</dbReference>
<dbReference type="InterPro" id="IPR002307">
    <property type="entry name" value="Tyr-tRNA-ligase"/>
</dbReference>
<dbReference type="InterPro" id="IPR024088">
    <property type="entry name" value="Tyr-tRNA-ligase_bac-type"/>
</dbReference>
<dbReference type="InterPro" id="IPR024107">
    <property type="entry name" value="Tyr-tRNA-ligase_bac_1"/>
</dbReference>
<dbReference type="NCBIfam" id="TIGR00234">
    <property type="entry name" value="tyrS"/>
    <property type="match status" value="1"/>
</dbReference>
<dbReference type="PANTHER" id="PTHR11766:SF0">
    <property type="entry name" value="TYROSINE--TRNA LIGASE, MITOCHONDRIAL"/>
    <property type="match status" value="1"/>
</dbReference>
<dbReference type="PANTHER" id="PTHR11766">
    <property type="entry name" value="TYROSYL-TRNA SYNTHETASE"/>
    <property type="match status" value="1"/>
</dbReference>
<dbReference type="Pfam" id="PF22421">
    <property type="entry name" value="SYY_C-terminal"/>
    <property type="match status" value="1"/>
</dbReference>
<dbReference type="Pfam" id="PF00579">
    <property type="entry name" value="tRNA-synt_1b"/>
    <property type="match status" value="1"/>
</dbReference>
<dbReference type="PRINTS" id="PR01040">
    <property type="entry name" value="TRNASYNTHTYR"/>
</dbReference>
<dbReference type="SUPFAM" id="SSF55174">
    <property type="entry name" value="Alpha-L RNA-binding motif"/>
    <property type="match status" value="1"/>
</dbReference>
<dbReference type="SUPFAM" id="SSF52374">
    <property type="entry name" value="Nucleotidylyl transferase"/>
    <property type="match status" value="1"/>
</dbReference>
<dbReference type="PROSITE" id="PS00178">
    <property type="entry name" value="AA_TRNA_LIGASE_I"/>
    <property type="match status" value="1"/>
</dbReference>
<dbReference type="PROSITE" id="PS50889">
    <property type="entry name" value="S4"/>
    <property type="match status" value="1"/>
</dbReference>
<keyword id="KW-0030">Aminoacyl-tRNA synthetase</keyword>
<keyword id="KW-0067">ATP-binding</keyword>
<keyword id="KW-0963">Cytoplasm</keyword>
<keyword id="KW-0436">Ligase</keyword>
<keyword id="KW-0547">Nucleotide-binding</keyword>
<keyword id="KW-0648">Protein biosynthesis</keyword>
<keyword id="KW-0694">RNA-binding</keyword>
<name>SYY_MYCCT</name>
<feature type="chain" id="PRO_0000234729" description="Tyrosine--tRNA ligase">
    <location>
        <begin position="1"/>
        <end position="414"/>
    </location>
</feature>
<feature type="domain" description="S4 RNA-binding" evidence="1">
    <location>
        <begin position="347"/>
        <end position="414"/>
    </location>
</feature>
<feature type="short sequence motif" description="'HIGH' region">
    <location>
        <begin position="40"/>
        <end position="49"/>
    </location>
</feature>
<feature type="short sequence motif" description="'KMSKS' region">
    <location>
        <begin position="226"/>
        <end position="230"/>
    </location>
</feature>
<feature type="binding site" evidence="1">
    <location>
        <position position="35"/>
    </location>
    <ligand>
        <name>L-tyrosine</name>
        <dbReference type="ChEBI" id="CHEBI:58315"/>
    </ligand>
</feature>
<feature type="binding site" evidence="1">
    <location>
        <position position="164"/>
    </location>
    <ligand>
        <name>L-tyrosine</name>
        <dbReference type="ChEBI" id="CHEBI:58315"/>
    </ligand>
</feature>
<feature type="binding site" evidence="1">
    <location>
        <position position="168"/>
    </location>
    <ligand>
        <name>L-tyrosine</name>
        <dbReference type="ChEBI" id="CHEBI:58315"/>
    </ligand>
</feature>
<feature type="binding site" evidence="1">
    <location>
        <position position="229"/>
    </location>
    <ligand>
        <name>ATP</name>
        <dbReference type="ChEBI" id="CHEBI:30616"/>
    </ligand>
</feature>
<gene>
    <name evidence="1" type="primary">tyrS</name>
    <name type="ordered locus">MCAP_0639</name>
</gene>
<organism>
    <name type="scientific">Mycoplasma capricolum subsp. capricolum (strain California kid / ATCC 27343 / NCTC 10154)</name>
    <dbReference type="NCBI Taxonomy" id="340047"/>
    <lineage>
        <taxon>Bacteria</taxon>
        <taxon>Bacillati</taxon>
        <taxon>Mycoplasmatota</taxon>
        <taxon>Mollicutes</taxon>
        <taxon>Mycoplasmataceae</taxon>
        <taxon>Mycoplasma</taxon>
    </lineage>
</organism>
<protein>
    <recommendedName>
        <fullName evidence="1">Tyrosine--tRNA ligase</fullName>
        <ecNumber evidence="1">6.1.1.1</ecNumber>
    </recommendedName>
    <alternativeName>
        <fullName evidence="1">Tyrosyl-tRNA synthetase</fullName>
        <shortName evidence="1">TyrRS</shortName>
    </alternativeName>
</protein>
<proteinExistence type="inferred from homology"/>
<accession>Q2SRK6</accession>
<comment type="function">
    <text evidence="1">Catalyzes the attachment of tyrosine to tRNA(Tyr) in a two-step reaction: tyrosine is first activated by ATP to form Tyr-AMP and then transferred to the acceptor end of tRNA(Tyr).</text>
</comment>
<comment type="catalytic activity">
    <reaction evidence="1">
        <text>tRNA(Tyr) + L-tyrosine + ATP = L-tyrosyl-tRNA(Tyr) + AMP + diphosphate + H(+)</text>
        <dbReference type="Rhea" id="RHEA:10220"/>
        <dbReference type="Rhea" id="RHEA-COMP:9706"/>
        <dbReference type="Rhea" id="RHEA-COMP:9707"/>
        <dbReference type="ChEBI" id="CHEBI:15378"/>
        <dbReference type="ChEBI" id="CHEBI:30616"/>
        <dbReference type="ChEBI" id="CHEBI:33019"/>
        <dbReference type="ChEBI" id="CHEBI:58315"/>
        <dbReference type="ChEBI" id="CHEBI:78442"/>
        <dbReference type="ChEBI" id="CHEBI:78536"/>
        <dbReference type="ChEBI" id="CHEBI:456215"/>
        <dbReference type="EC" id="6.1.1.1"/>
    </reaction>
</comment>
<comment type="subunit">
    <text evidence="1">Homodimer.</text>
</comment>
<comment type="subcellular location">
    <subcellularLocation>
        <location evidence="1">Cytoplasm</location>
    </subcellularLocation>
</comment>
<comment type="similarity">
    <text evidence="1">Belongs to the class-I aminoacyl-tRNA synthetase family. TyrS type 1 subfamily.</text>
</comment>
<evidence type="ECO:0000255" key="1">
    <source>
        <dbReference type="HAMAP-Rule" id="MF_02006"/>
    </source>
</evidence>